<sequence length="691" mass="76401">MEIGISKYRNIGIMAHIDAGKTTTTERILFYTGKQNRIGEVHDGAASMDWMEQEKERGITITSAATTCFWNDHRVNIIDTPGHVDFTIEVERSLRVLDGAVAVFDGVAGVEPQSETVWRQADKYSVPRICFVNKMDRIGANFYRCVDMIKTKLGAAPLVIHLPIGSEKDFKGIIDLISMKAIIWQEETLGAKFSYEDIPSDLLDKAQEYRNLLLDAAAEMDDEAMNTYFESNDLPVDLLKKCVRNGTIKGKFVPVLCGSAFKNKGVQPLLDGVVDFLPSPIDVDVIVGIDPKDSEKKIEVKPSEKEKFVALAFKVMTDKFVGSLTFIRIYSGKLKSKSTVSNALKNETEGIGRMLLMHANNREDITEARAGDIVALVGLKKTTTGDTLCSVDFPILLERMEFPEPVIEIAVEPKTTSDQEKLGIALNRLVAEDPSLRMSVNAESGQTILKGMGELHLEIIVDRMKREFNVEANVGAPQVAYRETITKSVEIDYTHKKQSGGAGQFAKVKIKFEPLEPGSGFQFESKIVGGAIPKEYIPGVENGLELIKEGGIISGFPLIDFKATLLDGAFHEVDSSPLAFELAAKGAFKEMANKAGPKMLEPIMKVEIITPEEYMGDVMGDINSRRGNVADMLDLGNNSKIITASVPLANMFGYINVLRSMSQGRAQYSMHFSCYEQVPQYVVDELKLEYN</sequence>
<organism>
    <name type="scientific">Wolbachia pipientis wMel</name>
    <dbReference type="NCBI Taxonomy" id="163164"/>
    <lineage>
        <taxon>Bacteria</taxon>
        <taxon>Pseudomonadati</taxon>
        <taxon>Pseudomonadota</taxon>
        <taxon>Alphaproteobacteria</taxon>
        <taxon>Rickettsiales</taxon>
        <taxon>Anaplasmataceae</taxon>
        <taxon>Wolbachieae</taxon>
        <taxon>Wolbachia</taxon>
    </lineage>
</organism>
<name>EFG_WOLPM</name>
<proteinExistence type="inferred from homology"/>
<gene>
    <name evidence="1" type="primary">fusA</name>
    <name type="ordered locus">WD_0016</name>
</gene>
<comment type="function">
    <text evidence="1">Catalyzes the GTP-dependent ribosomal translocation step during translation elongation. During this step, the ribosome changes from the pre-translocational (PRE) to the post-translocational (POST) state as the newly formed A-site-bound peptidyl-tRNA and P-site-bound deacylated tRNA move to the P and E sites, respectively. Catalyzes the coordinated movement of the two tRNA molecules, the mRNA and conformational changes in the ribosome.</text>
</comment>
<comment type="subcellular location">
    <subcellularLocation>
        <location evidence="1">Cytoplasm</location>
    </subcellularLocation>
</comment>
<comment type="similarity">
    <text evidence="1">Belongs to the TRAFAC class translation factor GTPase superfamily. Classic translation factor GTPase family. EF-G/EF-2 subfamily.</text>
</comment>
<feature type="chain" id="PRO_0000091267" description="Elongation factor G">
    <location>
        <begin position="1"/>
        <end position="691"/>
    </location>
</feature>
<feature type="domain" description="tr-type G">
    <location>
        <begin position="6"/>
        <end position="281"/>
    </location>
</feature>
<feature type="binding site" evidence="1">
    <location>
        <begin position="15"/>
        <end position="22"/>
    </location>
    <ligand>
        <name>GTP</name>
        <dbReference type="ChEBI" id="CHEBI:37565"/>
    </ligand>
</feature>
<feature type="binding site" evidence="1">
    <location>
        <begin position="79"/>
        <end position="83"/>
    </location>
    <ligand>
        <name>GTP</name>
        <dbReference type="ChEBI" id="CHEBI:37565"/>
    </ligand>
</feature>
<feature type="binding site" evidence="1">
    <location>
        <begin position="133"/>
        <end position="136"/>
    </location>
    <ligand>
        <name>GTP</name>
        <dbReference type="ChEBI" id="CHEBI:37565"/>
    </ligand>
</feature>
<protein>
    <recommendedName>
        <fullName evidence="1">Elongation factor G</fullName>
        <shortName evidence="1">EF-G</shortName>
    </recommendedName>
</protein>
<evidence type="ECO:0000255" key="1">
    <source>
        <dbReference type="HAMAP-Rule" id="MF_00054"/>
    </source>
</evidence>
<keyword id="KW-0963">Cytoplasm</keyword>
<keyword id="KW-0251">Elongation factor</keyword>
<keyword id="KW-0342">GTP-binding</keyword>
<keyword id="KW-0547">Nucleotide-binding</keyword>
<keyword id="KW-0648">Protein biosynthesis</keyword>
<accession>Q73IX7</accession>
<dbReference type="EMBL" id="AE017196">
    <property type="protein sequence ID" value="AAS13783.1"/>
    <property type="molecule type" value="Genomic_DNA"/>
</dbReference>
<dbReference type="RefSeq" id="WP_010962308.1">
    <property type="nucleotide sequence ID" value="NZ_OX384529.1"/>
</dbReference>
<dbReference type="SMR" id="Q73IX7"/>
<dbReference type="EnsemblBacteria" id="AAS13783">
    <property type="protein sequence ID" value="AAS13783"/>
    <property type="gene ID" value="WD_0016"/>
</dbReference>
<dbReference type="GeneID" id="70035511"/>
<dbReference type="KEGG" id="wol:WD_0016"/>
<dbReference type="eggNOG" id="COG0480">
    <property type="taxonomic scope" value="Bacteria"/>
</dbReference>
<dbReference type="Proteomes" id="UP000008215">
    <property type="component" value="Chromosome"/>
</dbReference>
<dbReference type="GO" id="GO:0005737">
    <property type="term" value="C:cytoplasm"/>
    <property type="evidence" value="ECO:0007669"/>
    <property type="project" value="UniProtKB-SubCell"/>
</dbReference>
<dbReference type="GO" id="GO:0005525">
    <property type="term" value="F:GTP binding"/>
    <property type="evidence" value="ECO:0007669"/>
    <property type="project" value="UniProtKB-UniRule"/>
</dbReference>
<dbReference type="GO" id="GO:0003924">
    <property type="term" value="F:GTPase activity"/>
    <property type="evidence" value="ECO:0007669"/>
    <property type="project" value="InterPro"/>
</dbReference>
<dbReference type="GO" id="GO:0003746">
    <property type="term" value="F:translation elongation factor activity"/>
    <property type="evidence" value="ECO:0007669"/>
    <property type="project" value="UniProtKB-UniRule"/>
</dbReference>
<dbReference type="GO" id="GO:0032790">
    <property type="term" value="P:ribosome disassembly"/>
    <property type="evidence" value="ECO:0007669"/>
    <property type="project" value="TreeGrafter"/>
</dbReference>
<dbReference type="CDD" id="cd01886">
    <property type="entry name" value="EF-G"/>
    <property type="match status" value="1"/>
</dbReference>
<dbReference type="CDD" id="cd16262">
    <property type="entry name" value="EFG_III"/>
    <property type="match status" value="1"/>
</dbReference>
<dbReference type="CDD" id="cd01434">
    <property type="entry name" value="EFG_mtEFG1_IV"/>
    <property type="match status" value="1"/>
</dbReference>
<dbReference type="CDD" id="cd03713">
    <property type="entry name" value="EFG_mtEFG_C"/>
    <property type="match status" value="1"/>
</dbReference>
<dbReference type="CDD" id="cd04088">
    <property type="entry name" value="EFG_mtEFG_II"/>
    <property type="match status" value="1"/>
</dbReference>
<dbReference type="FunFam" id="2.40.30.10:FF:000006">
    <property type="entry name" value="Elongation factor G"/>
    <property type="match status" value="1"/>
</dbReference>
<dbReference type="FunFam" id="3.30.230.10:FF:000003">
    <property type="entry name" value="Elongation factor G"/>
    <property type="match status" value="1"/>
</dbReference>
<dbReference type="FunFam" id="3.30.70.240:FF:000001">
    <property type="entry name" value="Elongation factor G"/>
    <property type="match status" value="1"/>
</dbReference>
<dbReference type="FunFam" id="3.30.70.870:FF:000001">
    <property type="entry name" value="Elongation factor G"/>
    <property type="match status" value="1"/>
</dbReference>
<dbReference type="FunFam" id="3.40.50.300:FF:000029">
    <property type="entry name" value="Elongation factor G"/>
    <property type="match status" value="1"/>
</dbReference>
<dbReference type="Gene3D" id="3.30.230.10">
    <property type="match status" value="1"/>
</dbReference>
<dbReference type="Gene3D" id="3.30.70.240">
    <property type="match status" value="1"/>
</dbReference>
<dbReference type="Gene3D" id="3.30.70.870">
    <property type="entry name" value="Elongation Factor G (Translational Gtpase), domain 3"/>
    <property type="match status" value="1"/>
</dbReference>
<dbReference type="Gene3D" id="3.40.50.300">
    <property type="entry name" value="P-loop containing nucleotide triphosphate hydrolases"/>
    <property type="match status" value="1"/>
</dbReference>
<dbReference type="Gene3D" id="2.40.30.10">
    <property type="entry name" value="Translation factors"/>
    <property type="match status" value="1"/>
</dbReference>
<dbReference type="HAMAP" id="MF_00054_B">
    <property type="entry name" value="EF_G_EF_2_B"/>
    <property type="match status" value="1"/>
</dbReference>
<dbReference type="InterPro" id="IPR053905">
    <property type="entry name" value="EF-G-like_DII"/>
</dbReference>
<dbReference type="InterPro" id="IPR041095">
    <property type="entry name" value="EFG_II"/>
</dbReference>
<dbReference type="InterPro" id="IPR009022">
    <property type="entry name" value="EFG_III"/>
</dbReference>
<dbReference type="InterPro" id="IPR035647">
    <property type="entry name" value="EFG_III/V"/>
</dbReference>
<dbReference type="InterPro" id="IPR047872">
    <property type="entry name" value="EFG_IV"/>
</dbReference>
<dbReference type="InterPro" id="IPR035649">
    <property type="entry name" value="EFG_V"/>
</dbReference>
<dbReference type="InterPro" id="IPR000640">
    <property type="entry name" value="EFG_V-like"/>
</dbReference>
<dbReference type="InterPro" id="IPR031157">
    <property type="entry name" value="G_TR_CS"/>
</dbReference>
<dbReference type="InterPro" id="IPR027417">
    <property type="entry name" value="P-loop_NTPase"/>
</dbReference>
<dbReference type="InterPro" id="IPR020568">
    <property type="entry name" value="Ribosomal_Su5_D2-typ_SF"/>
</dbReference>
<dbReference type="InterPro" id="IPR014721">
    <property type="entry name" value="Ribsml_uS5_D2-typ_fold_subgr"/>
</dbReference>
<dbReference type="InterPro" id="IPR005225">
    <property type="entry name" value="Small_GTP-bd"/>
</dbReference>
<dbReference type="InterPro" id="IPR000795">
    <property type="entry name" value="T_Tr_GTP-bd_dom"/>
</dbReference>
<dbReference type="InterPro" id="IPR009000">
    <property type="entry name" value="Transl_B-barrel_sf"/>
</dbReference>
<dbReference type="InterPro" id="IPR004540">
    <property type="entry name" value="Transl_elong_EFG/EF2"/>
</dbReference>
<dbReference type="InterPro" id="IPR005517">
    <property type="entry name" value="Transl_elong_EFG/EF2_IV"/>
</dbReference>
<dbReference type="NCBIfam" id="TIGR00484">
    <property type="entry name" value="EF-G"/>
    <property type="match status" value="1"/>
</dbReference>
<dbReference type="NCBIfam" id="NF009381">
    <property type="entry name" value="PRK12740.1-5"/>
    <property type="match status" value="1"/>
</dbReference>
<dbReference type="NCBIfam" id="TIGR00231">
    <property type="entry name" value="small_GTP"/>
    <property type="match status" value="1"/>
</dbReference>
<dbReference type="PANTHER" id="PTHR43261:SF1">
    <property type="entry name" value="RIBOSOME-RELEASING FACTOR 2, MITOCHONDRIAL"/>
    <property type="match status" value="1"/>
</dbReference>
<dbReference type="PANTHER" id="PTHR43261">
    <property type="entry name" value="TRANSLATION ELONGATION FACTOR G-RELATED"/>
    <property type="match status" value="1"/>
</dbReference>
<dbReference type="Pfam" id="PF22042">
    <property type="entry name" value="EF-G_D2"/>
    <property type="match status" value="1"/>
</dbReference>
<dbReference type="Pfam" id="PF00679">
    <property type="entry name" value="EFG_C"/>
    <property type="match status" value="1"/>
</dbReference>
<dbReference type="Pfam" id="PF14492">
    <property type="entry name" value="EFG_III"/>
    <property type="match status" value="1"/>
</dbReference>
<dbReference type="Pfam" id="PF03764">
    <property type="entry name" value="EFG_IV"/>
    <property type="match status" value="1"/>
</dbReference>
<dbReference type="Pfam" id="PF00009">
    <property type="entry name" value="GTP_EFTU"/>
    <property type="match status" value="1"/>
</dbReference>
<dbReference type="PRINTS" id="PR00315">
    <property type="entry name" value="ELONGATNFCT"/>
</dbReference>
<dbReference type="SMART" id="SM00838">
    <property type="entry name" value="EFG_C"/>
    <property type="match status" value="1"/>
</dbReference>
<dbReference type="SMART" id="SM00889">
    <property type="entry name" value="EFG_IV"/>
    <property type="match status" value="1"/>
</dbReference>
<dbReference type="SUPFAM" id="SSF54980">
    <property type="entry name" value="EF-G C-terminal domain-like"/>
    <property type="match status" value="2"/>
</dbReference>
<dbReference type="SUPFAM" id="SSF52540">
    <property type="entry name" value="P-loop containing nucleoside triphosphate hydrolases"/>
    <property type="match status" value="1"/>
</dbReference>
<dbReference type="SUPFAM" id="SSF54211">
    <property type="entry name" value="Ribosomal protein S5 domain 2-like"/>
    <property type="match status" value="1"/>
</dbReference>
<dbReference type="SUPFAM" id="SSF50447">
    <property type="entry name" value="Translation proteins"/>
    <property type="match status" value="1"/>
</dbReference>
<dbReference type="PROSITE" id="PS00301">
    <property type="entry name" value="G_TR_1"/>
    <property type="match status" value="1"/>
</dbReference>
<dbReference type="PROSITE" id="PS51722">
    <property type="entry name" value="G_TR_2"/>
    <property type="match status" value="1"/>
</dbReference>
<reference key="1">
    <citation type="journal article" date="2004" name="PLoS Biol.">
        <title>Phylogenomics of the reproductive parasite Wolbachia pipientis wMel: a streamlined genome overrun by mobile genetic elements.</title>
        <authorList>
            <person name="Wu M."/>
            <person name="Sun L.V."/>
            <person name="Vamathevan J.J."/>
            <person name="Riegler M."/>
            <person name="DeBoy R.T."/>
            <person name="Brownlie J.C."/>
            <person name="McGraw E.A."/>
            <person name="Martin W."/>
            <person name="Esser C."/>
            <person name="Ahmadinejad N."/>
            <person name="Wiegand C."/>
            <person name="Madupu R."/>
            <person name="Beanan M.J."/>
            <person name="Brinkac L.M."/>
            <person name="Daugherty S.C."/>
            <person name="Durkin A.S."/>
            <person name="Kolonay J.F."/>
            <person name="Nelson W.C."/>
            <person name="Mohamoud Y."/>
            <person name="Lee P."/>
            <person name="Berry K.J."/>
            <person name="Young M.B."/>
            <person name="Utterback T.R."/>
            <person name="Weidman J.F."/>
            <person name="Nierman W.C."/>
            <person name="Paulsen I.T."/>
            <person name="Nelson K.E."/>
            <person name="Tettelin H."/>
            <person name="O'Neill S.L."/>
            <person name="Eisen J.A."/>
        </authorList>
    </citation>
    <scope>NUCLEOTIDE SEQUENCE [LARGE SCALE GENOMIC DNA]</scope>
</reference>